<comment type="function">
    <text evidence="2">May act as a negative regulator for the transcription of mutY, fabL, sspE and yfhP.</text>
</comment>
<comment type="subcellular location">
    <subcellularLocation>
        <location evidence="4">Cell membrane</location>
        <topology evidence="4">Multi-pass membrane protein</topology>
    </subcellularLocation>
</comment>
<comment type="induction">
    <text evidence="2 3">Autoregulated. Transcriptionally regulated by sigma-K. Expressed during exponential growth.</text>
</comment>
<comment type="disruption phenotype">
    <text evidence="2">Cells lacking this gene display increased rates of transcription of mutY, fabL, sspE and yfhP.</text>
</comment>
<feature type="chain" id="PRO_0000387956" description="Uncharacterized protein YfhP">
    <location>
        <begin position="1"/>
        <end position="327"/>
    </location>
</feature>
<feature type="transmembrane region" description="Helical" evidence="1">
    <location>
        <begin position="68"/>
        <end position="88"/>
    </location>
</feature>
<feature type="transmembrane region" description="Helical" evidence="1">
    <location>
        <begin position="92"/>
        <end position="112"/>
    </location>
</feature>
<feature type="transmembrane region" description="Helical" evidence="1">
    <location>
        <begin position="127"/>
        <end position="147"/>
    </location>
</feature>
<feature type="transmembrane region" description="Helical" evidence="1">
    <location>
        <begin position="148"/>
        <end position="168"/>
    </location>
</feature>
<keyword id="KW-1003">Cell membrane</keyword>
<keyword id="KW-0472">Membrane</keyword>
<keyword id="KW-1185">Reference proteome</keyword>
<keyword id="KW-0812">Transmembrane</keyword>
<keyword id="KW-1133">Transmembrane helix</keyword>
<sequence length="327" mass="37128">MDTGTHVVMGIALGGIATLDPVVGSDPAMAHAVMIATLAGSQAPDIDTVLKLKNNAVYIRNHRGFTHSIPAVLFWSVIIPAILYLFYPQADFLHLWLWTLLAVVLHVFVDIFNAYGTQAIRPFSKKWVALGLINTFDPFIFISHLAAIAIWYAGGSPGITFLSLYIILVGYYLVRLIMQLRIKRKLHEMIHDEIESIIISPTMKFRQWRIAVTTAHAFYVGRSMEGHVVILDTFNRVPVPETDVMHAAKQDDNIAAFLSFSPVYRWEVDTFKDHYEVRFIDLRYRSKGHYPFVAIVHIGHDLTIRSSYTGWIFSEEKLQKKLKLGSI</sequence>
<gene>
    <name type="primary">yfhP</name>
    <name type="ordered locus">BSU08620</name>
</gene>
<proteinExistence type="evidence at transcript level"/>
<organism>
    <name type="scientific">Bacillus subtilis (strain 168)</name>
    <dbReference type="NCBI Taxonomy" id="224308"/>
    <lineage>
        <taxon>Bacteria</taxon>
        <taxon>Bacillati</taxon>
        <taxon>Bacillota</taxon>
        <taxon>Bacilli</taxon>
        <taxon>Bacillales</taxon>
        <taxon>Bacillaceae</taxon>
        <taxon>Bacillus</taxon>
    </lineage>
</organism>
<protein>
    <recommendedName>
        <fullName>Uncharacterized protein YfhP</fullName>
    </recommendedName>
</protein>
<dbReference type="EMBL" id="D85082">
    <property type="protein sequence ID" value="BAA24482.1"/>
    <property type="molecule type" value="Genomic_DNA"/>
</dbReference>
<dbReference type="EMBL" id="AL009126">
    <property type="protein sequence ID" value="CAB12690.1"/>
    <property type="molecule type" value="Genomic_DNA"/>
</dbReference>
<dbReference type="PIR" id="H69801">
    <property type="entry name" value="H69801"/>
</dbReference>
<dbReference type="RefSeq" id="NP_388742.1">
    <property type="nucleotide sequence ID" value="NC_000964.3"/>
</dbReference>
<dbReference type="RefSeq" id="WP_003244136.1">
    <property type="nucleotide sequence ID" value="NZ_OZ025638.1"/>
</dbReference>
<dbReference type="FunCoup" id="O31583">
    <property type="interactions" value="4"/>
</dbReference>
<dbReference type="STRING" id="224308.BSU08620"/>
<dbReference type="PaxDb" id="224308-BSU08620"/>
<dbReference type="EnsemblBacteria" id="CAB12690">
    <property type="protein sequence ID" value="CAB12690"/>
    <property type="gene ID" value="BSU_08620"/>
</dbReference>
<dbReference type="GeneID" id="936190"/>
<dbReference type="KEGG" id="bsu:BSU08620"/>
<dbReference type="PATRIC" id="fig|224308.179.peg.930"/>
<dbReference type="eggNOG" id="COG1988">
    <property type="taxonomic scope" value="Bacteria"/>
</dbReference>
<dbReference type="InParanoid" id="O31583"/>
<dbReference type="OrthoDB" id="110250at2"/>
<dbReference type="PhylomeDB" id="O31583"/>
<dbReference type="BioCyc" id="BSUB:BSU08620-MONOMER"/>
<dbReference type="Proteomes" id="UP000001570">
    <property type="component" value="Chromosome"/>
</dbReference>
<dbReference type="GO" id="GO:0005886">
    <property type="term" value="C:plasma membrane"/>
    <property type="evidence" value="ECO:0007669"/>
    <property type="project" value="UniProtKB-SubCell"/>
</dbReference>
<dbReference type="InterPro" id="IPR053170">
    <property type="entry name" value="Transcription_regulator"/>
</dbReference>
<dbReference type="InterPro" id="IPR007404">
    <property type="entry name" value="YdjM-like"/>
</dbReference>
<dbReference type="PANTHER" id="PTHR40031">
    <property type="entry name" value="HYPOTHETICAL MEMBRANE SPANNING PROTEIN"/>
    <property type="match status" value="1"/>
</dbReference>
<dbReference type="PANTHER" id="PTHR40031:SF1">
    <property type="entry name" value="MEMBRANE-BOUND METAL-DEPENDENT HYDROLASE"/>
    <property type="match status" value="1"/>
</dbReference>
<dbReference type="Pfam" id="PF04307">
    <property type="entry name" value="YdjM"/>
    <property type="match status" value="1"/>
</dbReference>
<reference key="1">
    <citation type="journal article" date="1996" name="DNA Res.">
        <title>Cloning and sequencing of a 27.8-kb nucleotide sequence of the 79 degrees-81 degrees region of the Bacillus subtilis genome containing the sspE locus.</title>
        <authorList>
            <person name="Yamamoto H."/>
            <person name="Uchiyama S."/>
            <person name="Sekiguchi J."/>
        </authorList>
    </citation>
    <scope>NUCLEOTIDE SEQUENCE [GENOMIC DNA]</scope>
    <source>
        <strain>168 / AC327</strain>
    </source>
</reference>
<reference key="2">
    <citation type="journal article" date="1997" name="Nature">
        <title>The complete genome sequence of the Gram-positive bacterium Bacillus subtilis.</title>
        <authorList>
            <person name="Kunst F."/>
            <person name="Ogasawara N."/>
            <person name="Moszer I."/>
            <person name="Albertini A.M."/>
            <person name="Alloni G."/>
            <person name="Azevedo V."/>
            <person name="Bertero M.G."/>
            <person name="Bessieres P."/>
            <person name="Bolotin A."/>
            <person name="Borchert S."/>
            <person name="Borriss R."/>
            <person name="Boursier L."/>
            <person name="Brans A."/>
            <person name="Braun M."/>
            <person name="Brignell S.C."/>
            <person name="Bron S."/>
            <person name="Brouillet S."/>
            <person name="Bruschi C.V."/>
            <person name="Caldwell B."/>
            <person name="Capuano V."/>
            <person name="Carter N.M."/>
            <person name="Choi S.-K."/>
            <person name="Codani J.-J."/>
            <person name="Connerton I.F."/>
            <person name="Cummings N.J."/>
            <person name="Daniel R.A."/>
            <person name="Denizot F."/>
            <person name="Devine K.M."/>
            <person name="Duesterhoeft A."/>
            <person name="Ehrlich S.D."/>
            <person name="Emmerson P.T."/>
            <person name="Entian K.-D."/>
            <person name="Errington J."/>
            <person name="Fabret C."/>
            <person name="Ferrari E."/>
            <person name="Foulger D."/>
            <person name="Fritz C."/>
            <person name="Fujita M."/>
            <person name="Fujita Y."/>
            <person name="Fuma S."/>
            <person name="Galizzi A."/>
            <person name="Galleron N."/>
            <person name="Ghim S.-Y."/>
            <person name="Glaser P."/>
            <person name="Goffeau A."/>
            <person name="Golightly E.J."/>
            <person name="Grandi G."/>
            <person name="Guiseppi G."/>
            <person name="Guy B.J."/>
            <person name="Haga K."/>
            <person name="Haiech J."/>
            <person name="Harwood C.R."/>
            <person name="Henaut A."/>
            <person name="Hilbert H."/>
            <person name="Holsappel S."/>
            <person name="Hosono S."/>
            <person name="Hullo M.-F."/>
            <person name="Itaya M."/>
            <person name="Jones L.-M."/>
            <person name="Joris B."/>
            <person name="Karamata D."/>
            <person name="Kasahara Y."/>
            <person name="Klaerr-Blanchard M."/>
            <person name="Klein C."/>
            <person name="Kobayashi Y."/>
            <person name="Koetter P."/>
            <person name="Koningstein G."/>
            <person name="Krogh S."/>
            <person name="Kumano M."/>
            <person name="Kurita K."/>
            <person name="Lapidus A."/>
            <person name="Lardinois S."/>
            <person name="Lauber J."/>
            <person name="Lazarevic V."/>
            <person name="Lee S.-M."/>
            <person name="Levine A."/>
            <person name="Liu H."/>
            <person name="Masuda S."/>
            <person name="Mauel C."/>
            <person name="Medigue C."/>
            <person name="Medina N."/>
            <person name="Mellado R.P."/>
            <person name="Mizuno M."/>
            <person name="Moestl D."/>
            <person name="Nakai S."/>
            <person name="Noback M."/>
            <person name="Noone D."/>
            <person name="O'Reilly M."/>
            <person name="Ogawa K."/>
            <person name="Ogiwara A."/>
            <person name="Oudega B."/>
            <person name="Park S.-H."/>
            <person name="Parro V."/>
            <person name="Pohl T.M."/>
            <person name="Portetelle D."/>
            <person name="Porwollik S."/>
            <person name="Prescott A.M."/>
            <person name="Presecan E."/>
            <person name="Pujic P."/>
            <person name="Purnelle B."/>
            <person name="Rapoport G."/>
            <person name="Rey M."/>
            <person name="Reynolds S."/>
            <person name="Rieger M."/>
            <person name="Rivolta C."/>
            <person name="Rocha E."/>
            <person name="Roche B."/>
            <person name="Rose M."/>
            <person name="Sadaie Y."/>
            <person name="Sato T."/>
            <person name="Scanlan E."/>
            <person name="Schleich S."/>
            <person name="Schroeter R."/>
            <person name="Scoffone F."/>
            <person name="Sekiguchi J."/>
            <person name="Sekowska A."/>
            <person name="Seror S.J."/>
            <person name="Serror P."/>
            <person name="Shin B.-S."/>
            <person name="Soldo B."/>
            <person name="Sorokin A."/>
            <person name="Tacconi E."/>
            <person name="Takagi T."/>
            <person name="Takahashi H."/>
            <person name="Takemaru K."/>
            <person name="Takeuchi M."/>
            <person name="Tamakoshi A."/>
            <person name="Tanaka T."/>
            <person name="Terpstra P."/>
            <person name="Tognoni A."/>
            <person name="Tosato V."/>
            <person name="Uchiyama S."/>
            <person name="Vandenbol M."/>
            <person name="Vannier F."/>
            <person name="Vassarotti A."/>
            <person name="Viari A."/>
            <person name="Wambutt R."/>
            <person name="Wedler E."/>
            <person name="Wedler H."/>
            <person name="Weitzenegger T."/>
            <person name="Winters P."/>
            <person name="Wipat A."/>
            <person name="Yamamoto H."/>
            <person name="Yamane K."/>
            <person name="Yasumoto K."/>
            <person name="Yata K."/>
            <person name="Yoshida K."/>
            <person name="Yoshikawa H.-F."/>
            <person name="Zumstein E."/>
            <person name="Yoshikawa H."/>
            <person name="Danchin A."/>
        </authorList>
    </citation>
    <scope>NUCLEOTIDE SEQUENCE [LARGE SCALE GENOMIC DNA]</scope>
    <source>
        <strain>168</strain>
    </source>
</reference>
<reference key="3">
    <citation type="journal article" date="1999" name="Gene">
        <title>Identification of new sigmaK-dependent promoters using an in vitro transcription system derived from Bacillus subtilis.</title>
        <authorList>
            <person name="Fujita M."/>
        </authorList>
    </citation>
    <scope>INDUCTION BY SIGMA-K</scope>
    <source>
        <strain>168 / JH642</strain>
    </source>
</reference>
<reference key="4">
    <citation type="journal article" date="1999" name="Microbiology">
        <title>Transcription of genes near the sspE locus of the Bacillus subtilis genome.</title>
        <authorList>
            <person name="Yamamoto H."/>
            <person name="Mori M."/>
            <person name="Sekiguchi J."/>
        </authorList>
    </citation>
    <scope>FUNCTION</scope>
    <scope>INDUCTION</scope>
    <scope>DISRUPTION PHENOTYPE</scope>
    <source>
        <strain>168</strain>
    </source>
</reference>
<evidence type="ECO:0000255" key="1"/>
<evidence type="ECO:0000269" key="2">
    <source>
    </source>
</evidence>
<evidence type="ECO:0000269" key="3">
    <source>
    </source>
</evidence>
<evidence type="ECO:0000305" key="4"/>
<name>YFHP_BACSU</name>
<accession>O31583</accession>
<accession>Q79EV4</accession>